<organism>
    <name type="scientific">Saccharomyces cerevisiae (strain ATCC 204508 / S288c)</name>
    <name type="common">Baker's yeast</name>
    <dbReference type="NCBI Taxonomy" id="559292"/>
    <lineage>
        <taxon>Eukaryota</taxon>
        <taxon>Fungi</taxon>
        <taxon>Dikarya</taxon>
        <taxon>Ascomycota</taxon>
        <taxon>Saccharomycotina</taxon>
        <taxon>Saccharomycetes</taxon>
        <taxon>Saccharomycetales</taxon>
        <taxon>Saccharomycetaceae</taxon>
        <taxon>Saccharomyces</taxon>
    </lineage>
</organism>
<sequence>MLHIYIGKRLKGPASTFCFPLVLFTRTCTISSQRRPEINSGYFVQTDSAFHFWRPPIAPAEMGHEGHYGALVFPFSPRFPLPIVRSGNFFVSLAYIAPIRQSSPVSESSSPNSWP</sequence>
<proteinExistence type="uncertain"/>
<name>YD230_YEAST</name>
<comment type="miscellaneous">
    <text evidence="1">Partially overlaps COX20.</text>
</comment>
<comment type="caution">
    <text evidence="2">Product of a dubious gene prediction unlikely to encode a functional protein. Because of that it is not part of the S.cerevisiae S288c complete/reference proteome set.</text>
</comment>
<accession>A0A023PZA9</accession>
<reference key="1">
    <citation type="journal article" date="1997" name="Nature">
        <title>The nucleotide sequence of Saccharomyces cerevisiae chromosome IV.</title>
        <authorList>
            <person name="Jacq C."/>
            <person name="Alt-Moerbe J."/>
            <person name="Andre B."/>
            <person name="Arnold W."/>
            <person name="Bahr A."/>
            <person name="Ballesta J.P.G."/>
            <person name="Bargues M."/>
            <person name="Baron L."/>
            <person name="Becker A."/>
            <person name="Biteau N."/>
            <person name="Bloecker H."/>
            <person name="Blugeon C."/>
            <person name="Boskovic J."/>
            <person name="Brandt P."/>
            <person name="Brueckner M."/>
            <person name="Buitrago M.J."/>
            <person name="Coster F."/>
            <person name="Delaveau T."/>
            <person name="del Rey F."/>
            <person name="Dujon B."/>
            <person name="Eide L.G."/>
            <person name="Garcia-Cantalejo J.M."/>
            <person name="Goffeau A."/>
            <person name="Gomez-Peris A."/>
            <person name="Granotier C."/>
            <person name="Hanemann V."/>
            <person name="Hankeln T."/>
            <person name="Hoheisel J.D."/>
            <person name="Jaeger W."/>
            <person name="Jimenez A."/>
            <person name="Jonniaux J.-L."/>
            <person name="Kraemer C."/>
            <person name="Kuester H."/>
            <person name="Laamanen P."/>
            <person name="Legros Y."/>
            <person name="Louis E.J."/>
            <person name="Moeller-Rieker S."/>
            <person name="Monnet A."/>
            <person name="Moro M."/>
            <person name="Mueller-Auer S."/>
            <person name="Nussbaumer B."/>
            <person name="Paricio N."/>
            <person name="Paulin L."/>
            <person name="Perea J."/>
            <person name="Perez-Alonso M."/>
            <person name="Perez-Ortin J.E."/>
            <person name="Pohl T.M."/>
            <person name="Prydz H."/>
            <person name="Purnelle B."/>
            <person name="Rasmussen S.W."/>
            <person name="Remacha M.A."/>
            <person name="Revuelta J.L."/>
            <person name="Rieger M."/>
            <person name="Salom D."/>
            <person name="Saluz H.P."/>
            <person name="Saiz J.E."/>
            <person name="Saren A.-M."/>
            <person name="Schaefer M."/>
            <person name="Scharfe M."/>
            <person name="Schmidt E.R."/>
            <person name="Schneider C."/>
            <person name="Scholler P."/>
            <person name="Schwarz S."/>
            <person name="Soler-Mira A."/>
            <person name="Urrestarazu L.A."/>
            <person name="Verhasselt P."/>
            <person name="Vissers S."/>
            <person name="Voet M."/>
            <person name="Volckaert G."/>
            <person name="Wagner G."/>
            <person name="Wambutt R."/>
            <person name="Wedler E."/>
            <person name="Wedler H."/>
            <person name="Woelfl S."/>
            <person name="Harris D.E."/>
            <person name="Bowman S."/>
            <person name="Brown D."/>
            <person name="Churcher C.M."/>
            <person name="Connor R."/>
            <person name="Dedman K."/>
            <person name="Gentles S."/>
            <person name="Hamlin N."/>
            <person name="Hunt S."/>
            <person name="Jones L."/>
            <person name="McDonald S."/>
            <person name="Murphy L.D."/>
            <person name="Niblett D."/>
            <person name="Odell C."/>
            <person name="Oliver K."/>
            <person name="Rajandream M.A."/>
            <person name="Richards C."/>
            <person name="Shore L."/>
            <person name="Walsh S.V."/>
            <person name="Barrell B.G."/>
            <person name="Dietrich F.S."/>
            <person name="Mulligan J.T."/>
            <person name="Allen E."/>
            <person name="Araujo R."/>
            <person name="Aviles E."/>
            <person name="Berno A."/>
            <person name="Carpenter J."/>
            <person name="Chen E."/>
            <person name="Cherry J.M."/>
            <person name="Chung E."/>
            <person name="Duncan M."/>
            <person name="Hunicke-Smith S."/>
            <person name="Hyman R.W."/>
            <person name="Komp C."/>
            <person name="Lashkari D."/>
            <person name="Lew H."/>
            <person name="Lin D."/>
            <person name="Mosedale D."/>
            <person name="Nakahara K."/>
            <person name="Namath A."/>
            <person name="Oefner P."/>
            <person name="Oh C."/>
            <person name="Petel F.X."/>
            <person name="Roberts D."/>
            <person name="Schramm S."/>
            <person name="Schroeder M."/>
            <person name="Shogren T."/>
            <person name="Shroff N."/>
            <person name="Winant A."/>
            <person name="Yelton M.A."/>
            <person name="Botstein D."/>
            <person name="Davis R.W."/>
            <person name="Johnston M."/>
            <person name="Andrews S."/>
            <person name="Brinkman R."/>
            <person name="Cooper J."/>
            <person name="Ding H."/>
            <person name="Du Z."/>
            <person name="Favello A."/>
            <person name="Fulton L."/>
            <person name="Gattung S."/>
            <person name="Greco T."/>
            <person name="Hallsworth K."/>
            <person name="Hawkins J."/>
            <person name="Hillier L.W."/>
            <person name="Jier M."/>
            <person name="Johnson D."/>
            <person name="Johnston L."/>
            <person name="Kirsten J."/>
            <person name="Kucaba T."/>
            <person name="Langston Y."/>
            <person name="Latreille P."/>
            <person name="Le T."/>
            <person name="Mardis E."/>
            <person name="Menezes S."/>
            <person name="Miller N."/>
            <person name="Nhan M."/>
            <person name="Pauley A."/>
            <person name="Peluso D."/>
            <person name="Rifkin L."/>
            <person name="Riles L."/>
            <person name="Taich A."/>
            <person name="Trevaskis E."/>
            <person name="Vignati D."/>
            <person name="Wilcox L."/>
            <person name="Wohldman P."/>
            <person name="Vaudin M."/>
            <person name="Wilson R."/>
            <person name="Waterston R."/>
            <person name="Albermann K."/>
            <person name="Hani J."/>
            <person name="Heumann K."/>
            <person name="Kleine K."/>
            <person name="Mewes H.-W."/>
            <person name="Zollner A."/>
            <person name="Zaccaria P."/>
        </authorList>
    </citation>
    <scope>NUCLEOTIDE SEQUENCE [LARGE SCALE GENOMIC DNA]</scope>
    <source>
        <strain>ATCC 204508 / S288c</strain>
    </source>
</reference>
<reference key="2">
    <citation type="journal article" date="2014" name="G3 (Bethesda)">
        <title>The reference genome sequence of Saccharomyces cerevisiae: Then and now.</title>
        <authorList>
            <person name="Engel S.R."/>
            <person name="Dietrich F.S."/>
            <person name="Fisk D.G."/>
            <person name="Binkley G."/>
            <person name="Balakrishnan R."/>
            <person name="Costanzo M.C."/>
            <person name="Dwight S.S."/>
            <person name="Hitz B.C."/>
            <person name="Karra K."/>
            <person name="Nash R.S."/>
            <person name="Weng S."/>
            <person name="Wong E.D."/>
            <person name="Lloyd P."/>
            <person name="Skrzypek M.S."/>
            <person name="Miyasato S.R."/>
            <person name="Simison M."/>
            <person name="Cherry J.M."/>
        </authorList>
    </citation>
    <scope>GENOME REANNOTATION</scope>
    <source>
        <strain>ATCC 204508 / S288c</strain>
    </source>
</reference>
<evidence type="ECO:0000305" key="1"/>
<evidence type="ECO:0000305" key="2">
    <source>
    </source>
</evidence>
<evidence type="ECO:0000312" key="3">
    <source>
        <dbReference type="SGD" id="S000002638"/>
    </source>
</evidence>
<protein>
    <recommendedName>
        <fullName evidence="1">Putative uncharacterized protein YDR230W</fullName>
    </recommendedName>
</protein>
<gene>
    <name evidence="3" type="ordered locus">YDR230W</name>
</gene>
<dbReference type="EMBL" id="KJ412223">
    <property type="protein sequence ID" value="AHX39266.1"/>
    <property type="molecule type" value="Genomic_DNA"/>
</dbReference>
<dbReference type="PIR" id="S69751">
    <property type="entry name" value="S69751"/>
</dbReference>
<dbReference type="PaxDb" id="4932-YDR230W"/>
<dbReference type="EnsemblFungi" id="YDR230W_mRNA">
    <property type="protein sequence ID" value="YDR230W"/>
    <property type="gene ID" value="YDR230W"/>
</dbReference>
<dbReference type="AGR" id="SGD:S000002638"/>
<dbReference type="SGD" id="S000002638">
    <property type="gene designation" value="YDR230W"/>
</dbReference>
<dbReference type="HOGENOM" id="CLU_2110827_0_0_1"/>
<feature type="chain" id="PRO_0000430984" description="Putative uncharacterized protein YDR230W">
    <location>
        <begin position="1"/>
        <end position="115"/>
    </location>
</feature>